<comment type="function">
    <text evidence="1">Single strand-specific metallo-endoribonuclease involved in late-stage 70S ribosome quality control and in maturation of the 3' terminus of the 16S rRNA.</text>
</comment>
<comment type="cofactor">
    <cofactor evidence="1">
        <name>Zn(2+)</name>
        <dbReference type="ChEBI" id="CHEBI:29105"/>
    </cofactor>
    <text evidence="1">Binds 1 zinc ion.</text>
</comment>
<comment type="subcellular location">
    <subcellularLocation>
        <location evidence="1">Cytoplasm</location>
    </subcellularLocation>
</comment>
<comment type="similarity">
    <text evidence="1">Belongs to the endoribonuclease YbeY family.</text>
</comment>
<organism>
    <name type="scientific">Paraburkholderia phymatum (strain DSM 17167 / CIP 108236 / LMG 21445 / STM815)</name>
    <name type="common">Burkholderia phymatum</name>
    <dbReference type="NCBI Taxonomy" id="391038"/>
    <lineage>
        <taxon>Bacteria</taxon>
        <taxon>Pseudomonadati</taxon>
        <taxon>Pseudomonadota</taxon>
        <taxon>Betaproteobacteria</taxon>
        <taxon>Burkholderiales</taxon>
        <taxon>Burkholderiaceae</taxon>
        <taxon>Paraburkholderia</taxon>
    </lineage>
</organism>
<sequence>MSRAPKLSLNLQFPAGKAWPEHKSLLPKATVAAWIKAALFADAELTVRFVDADEGRTLNRTYRGKDYATNVLTFAYAESEDDPVTGDLILCCPVVEKEANEQGKPLGAHYAHLLVHGTLHAQGYDHEDEDEAEEMEAIETEVLGKLGFPDPYE</sequence>
<accession>B2JD86</accession>
<name>YBEY_PARP8</name>
<protein>
    <recommendedName>
        <fullName evidence="1">Endoribonuclease YbeY</fullName>
        <ecNumber evidence="1">3.1.-.-</ecNumber>
    </recommendedName>
</protein>
<evidence type="ECO:0000255" key="1">
    <source>
        <dbReference type="HAMAP-Rule" id="MF_00009"/>
    </source>
</evidence>
<reference key="1">
    <citation type="journal article" date="2014" name="Stand. Genomic Sci.">
        <title>Complete genome sequence of Burkholderia phymatum STM815(T), a broad host range and efficient nitrogen-fixing symbiont of Mimosa species.</title>
        <authorList>
            <person name="Moulin L."/>
            <person name="Klonowska A."/>
            <person name="Caroline B."/>
            <person name="Booth K."/>
            <person name="Vriezen J.A."/>
            <person name="Melkonian R."/>
            <person name="James E.K."/>
            <person name="Young J.P."/>
            <person name="Bena G."/>
            <person name="Hauser L."/>
            <person name="Land M."/>
            <person name="Kyrpides N."/>
            <person name="Bruce D."/>
            <person name="Chain P."/>
            <person name="Copeland A."/>
            <person name="Pitluck S."/>
            <person name="Woyke T."/>
            <person name="Lizotte-Waniewski M."/>
            <person name="Bristow J."/>
            <person name="Riley M."/>
        </authorList>
    </citation>
    <scope>NUCLEOTIDE SEQUENCE [LARGE SCALE GENOMIC DNA]</scope>
    <source>
        <strain>DSM 17167 / CIP 108236 / LMG 21445 / STM815</strain>
    </source>
</reference>
<feature type="chain" id="PRO_1000089157" description="Endoribonuclease YbeY">
    <location>
        <begin position="1"/>
        <end position="153"/>
    </location>
</feature>
<feature type="binding site" evidence="1">
    <location>
        <position position="116"/>
    </location>
    <ligand>
        <name>Zn(2+)</name>
        <dbReference type="ChEBI" id="CHEBI:29105"/>
        <note>catalytic</note>
    </ligand>
</feature>
<feature type="binding site" evidence="1">
    <location>
        <position position="120"/>
    </location>
    <ligand>
        <name>Zn(2+)</name>
        <dbReference type="ChEBI" id="CHEBI:29105"/>
        <note>catalytic</note>
    </ligand>
</feature>
<feature type="binding site" evidence="1">
    <location>
        <position position="126"/>
    </location>
    <ligand>
        <name>Zn(2+)</name>
        <dbReference type="ChEBI" id="CHEBI:29105"/>
        <note>catalytic</note>
    </ligand>
</feature>
<proteinExistence type="inferred from homology"/>
<dbReference type="EC" id="3.1.-.-" evidence="1"/>
<dbReference type="EMBL" id="CP001043">
    <property type="protein sequence ID" value="ACC69603.1"/>
    <property type="molecule type" value="Genomic_DNA"/>
</dbReference>
<dbReference type="RefSeq" id="WP_012399829.1">
    <property type="nucleotide sequence ID" value="NC_010622.1"/>
</dbReference>
<dbReference type="SMR" id="B2JD86"/>
<dbReference type="STRING" id="391038.Bphy_0410"/>
<dbReference type="KEGG" id="bph:Bphy_0410"/>
<dbReference type="eggNOG" id="COG0319">
    <property type="taxonomic scope" value="Bacteria"/>
</dbReference>
<dbReference type="HOGENOM" id="CLU_106710_0_1_4"/>
<dbReference type="OrthoDB" id="9807740at2"/>
<dbReference type="Proteomes" id="UP000001192">
    <property type="component" value="Chromosome 1"/>
</dbReference>
<dbReference type="GO" id="GO:0005737">
    <property type="term" value="C:cytoplasm"/>
    <property type="evidence" value="ECO:0007669"/>
    <property type="project" value="UniProtKB-SubCell"/>
</dbReference>
<dbReference type="GO" id="GO:0004222">
    <property type="term" value="F:metalloendopeptidase activity"/>
    <property type="evidence" value="ECO:0007669"/>
    <property type="project" value="InterPro"/>
</dbReference>
<dbReference type="GO" id="GO:0004521">
    <property type="term" value="F:RNA endonuclease activity"/>
    <property type="evidence" value="ECO:0007669"/>
    <property type="project" value="UniProtKB-UniRule"/>
</dbReference>
<dbReference type="GO" id="GO:0008270">
    <property type="term" value="F:zinc ion binding"/>
    <property type="evidence" value="ECO:0007669"/>
    <property type="project" value="UniProtKB-UniRule"/>
</dbReference>
<dbReference type="GO" id="GO:0006364">
    <property type="term" value="P:rRNA processing"/>
    <property type="evidence" value="ECO:0007669"/>
    <property type="project" value="UniProtKB-UniRule"/>
</dbReference>
<dbReference type="Gene3D" id="3.40.390.30">
    <property type="entry name" value="Metalloproteases ('zincins'), catalytic domain"/>
    <property type="match status" value="1"/>
</dbReference>
<dbReference type="HAMAP" id="MF_00009">
    <property type="entry name" value="Endoribonucl_YbeY"/>
    <property type="match status" value="1"/>
</dbReference>
<dbReference type="InterPro" id="IPR023091">
    <property type="entry name" value="MetalPrtase_cat_dom_sf_prd"/>
</dbReference>
<dbReference type="InterPro" id="IPR002036">
    <property type="entry name" value="YbeY"/>
</dbReference>
<dbReference type="InterPro" id="IPR020549">
    <property type="entry name" value="YbeY_CS"/>
</dbReference>
<dbReference type="NCBIfam" id="TIGR00043">
    <property type="entry name" value="rRNA maturation RNase YbeY"/>
    <property type="match status" value="1"/>
</dbReference>
<dbReference type="PANTHER" id="PTHR46986">
    <property type="entry name" value="ENDORIBONUCLEASE YBEY, CHLOROPLASTIC"/>
    <property type="match status" value="1"/>
</dbReference>
<dbReference type="PANTHER" id="PTHR46986:SF1">
    <property type="entry name" value="ENDORIBONUCLEASE YBEY, CHLOROPLASTIC"/>
    <property type="match status" value="1"/>
</dbReference>
<dbReference type="Pfam" id="PF02130">
    <property type="entry name" value="YbeY"/>
    <property type="match status" value="1"/>
</dbReference>
<dbReference type="SUPFAM" id="SSF55486">
    <property type="entry name" value="Metalloproteases ('zincins'), catalytic domain"/>
    <property type="match status" value="1"/>
</dbReference>
<dbReference type="PROSITE" id="PS01306">
    <property type="entry name" value="UPF0054"/>
    <property type="match status" value="1"/>
</dbReference>
<keyword id="KW-0963">Cytoplasm</keyword>
<keyword id="KW-0255">Endonuclease</keyword>
<keyword id="KW-0378">Hydrolase</keyword>
<keyword id="KW-0479">Metal-binding</keyword>
<keyword id="KW-0540">Nuclease</keyword>
<keyword id="KW-1185">Reference proteome</keyword>
<keyword id="KW-0690">Ribosome biogenesis</keyword>
<keyword id="KW-0698">rRNA processing</keyword>
<keyword id="KW-0862">Zinc</keyword>
<gene>
    <name evidence="1" type="primary">ybeY</name>
    <name type="ordered locus">Bphy_0410</name>
</gene>